<dbReference type="EC" id="2.1.1.110" evidence="7"/>
<dbReference type="EMBL" id="L22091">
    <property type="protein sequence ID" value="AAA32697.1"/>
    <property type="molecule type" value="mRNA"/>
</dbReference>
<dbReference type="EMBL" id="L25835">
    <property type="protein sequence ID" value="AAA32699.1"/>
    <property type="molecule type" value="Genomic_DNA"/>
</dbReference>
<dbReference type="EMBL" id="AY371490">
    <property type="protein sequence ID" value="AAS66017.1"/>
    <property type="molecule type" value="Genomic_DNA"/>
</dbReference>
<dbReference type="EMBL" id="JZEE01000729">
    <property type="protein sequence ID" value="KJK60770.1"/>
    <property type="status" value="ALT_SEQ"/>
    <property type="molecule type" value="Genomic_DNA"/>
</dbReference>
<dbReference type="SMR" id="Q12120"/>
<dbReference type="STRING" id="1403190.Q12120"/>
<dbReference type="KEGG" id="ag:AAA32697"/>
<dbReference type="OrthoDB" id="1606438at2759"/>
<dbReference type="BioCyc" id="MetaCyc:MONOMER-14043"/>
<dbReference type="UniPathway" id="UPA00287"/>
<dbReference type="Proteomes" id="UP000033540">
    <property type="component" value="Unassembled WGS sequence"/>
</dbReference>
<dbReference type="GO" id="GO:0005829">
    <property type="term" value="C:cytosol"/>
    <property type="evidence" value="ECO:0000314"/>
    <property type="project" value="UniProt"/>
</dbReference>
<dbReference type="GO" id="GO:0005773">
    <property type="term" value="C:vacuole"/>
    <property type="evidence" value="ECO:0007669"/>
    <property type="project" value="UniProtKB-SubCell"/>
</dbReference>
<dbReference type="GO" id="GO:0008171">
    <property type="term" value="F:O-methyltransferase activity"/>
    <property type="evidence" value="ECO:0000314"/>
    <property type="project" value="UniProt"/>
</dbReference>
<dbReference type="GO" id="GO:0046983">
    <property type="term" value="F:protein dimerization activity"/>
    <property type="evidence" value="ECO:0007669"/>
    <property type="project" value="InterPro"/>
</dbReference>
<dbReference type="GO" id="GO:0047146">
    <property type="term" value="F:sterigmatocystin 7-O-methyltransferase activity"/>
    <property type="evidence" value="ECO:0000314"/>
    <property type="project" value="UniProt"/>
</dbReference>
<dbReference type="GO" id="GO:0045122">
    <property type="term" value="P:aflatoxin biosynthetic process"/>
    <property type="evidence" value="ECO:0000314"/>
    <property type="project" value="GO_Central"/>
</dbReference>
<dbReference type="GO" id="GO:0032259">
    <property type="term" value="P:methylation"/>
    <property type="evidence" value="ECO:0007669"/>
    <property type="project" value="UniProtKB-KW"/>
</dbReference>
<dbReference type="Gene3D" id="3.40.50.150">
    <property type="entry name" value="Vaccinia Virus protein VP39"/>
    <property type="match status" value="1"/>
</dbReference>
<dbReference type="Gene3D" id="1.10.10.10">
    <property type="entry name" value="Winged helix-like DNA-binding domain superfamily/Winged helix DNA-binding domain"/>
    <property type="match status" value="1"/>
</dbReference>
<dbReference type="InterPro" id="IPR016461">
    <property type="entry name" value="COMT-like"/>
</dbReference>
<dbReference type="InterPro" id="IPR001077">
    <property type="entry name" value="O_MeTrfase_dom"/>
</dbReference>
<dbReference type="InterPro" id="IPR012967">
    <property type="entry name" value="Plant_O-MeTrfase_dimerisation"/>
</dbReference>
<dbReference type="InterPro" id="IPR029063">
    <property type="entry name" value="SAM-dependent_MTases_sf"/>
</dbReference>
<dbReference type="InterPro" id="IPR036388">
    <property type="entry name" value="WH-like_DNA-bd_sf"/>
</dbReference>
<dbReference type="InterPro" id="IPR036390">
    <property type="entry name" value="WH_DNA-bd_sf"/>
</dbReference>
<dbReference type="PANTHER" id="PTHR43712:SF5">
    <property type="entry name" value="O-METHYLTRANSFERASE ASQN-RELATED"/>
    <property type="match status" value="1"/>
</dbReference>
<dbReference type="PANTHER" id="PTHR43712">
    <property type="entry name" value="PUTATIVE (AFU_ORTHOLOGUE AFUA_4G14580)-RELATED"/>
    <property type="match status" value="1"/>
</dbReference>
<dbReference type="Pfam" id="PF08100">
    <property type="entry name" value="Dimerisation"/>
    <property type="match status" value="1"/>
</dbReference>
<dbReference type="Pfam" id="PF00891">
    <property type="entry name" value="Methyltransf_2"/>
    <property type="match status" value="1"/>
</dbReference>
<dbReference type="SUPFAM" id="SSF53335">
    <property type="entry name" value="S-adenosyl-L-methionine-dependent methyltransferases"/>
    <property type="match status" value="1"/>
</dbReference>
<dbReference type="SUPFAM" id="SSF46785">
    <property type="entry name" value="Winged helix' DNA-binding domain"/>
    <property type="match status" value="1"/>
</dbReference>
<dbReference type="PROSITE" id="PS51683">
    <property type="entry name" value="SAM_OMT_II"/>
    <property type="match status" value="1"/>
</dbReference>
<evidence type="ECO:0000250" key="1"/>
<evidence type="ECO:0000250" key="2">
    <source>
        <dbReference type="UniProtKB" id="O04385"/>
    </source>
</evidence>
<evidence type="ECO:0000255" key="3">
    <source>
        <dbReference type="PROSITE-ProRule" id="PRU01020"/>
    </source>
</evidence>
<evidence type="ECO:0000269" key="4">
    <source>
    </source>
</evidence>
<evidence type="ECO:0000269" key="5">
    <source>
    </source>
</evidence>
<evidence type="ECO:0000269" key="6">
    <source>
    </source>
</evidence>
<evidence type="ECO:0000269" key="7">
    <source>
    </source>
</evidence>
<evidence type="ECO:0000303" key="8">
    <source>
    </source>
</evidence>
<evidence type="ECO:0000303" key="9">
    <source>
    </source>
</evidence>
<evidence type="ECO:0000305" key="10"/>
<evidence type="ECO:0000305" key="11">
    <source>
    </source>
</evidence>
<organism>
    <name type="scientific">Aspergillus parasiticus (strain ATCC 56775 / NRRL 5862 / SRRC 143 / SU-1)</name>
    <dbReference type="NCBI Taxonomy" id="1403190"/>
    <lineage>
        <taxon>Eukaryota</taxon>
        <taxon>Fungi</taxon>
        <taxon>Dikarya</taxon>
        <taxon>Ascomycota</taxon>
        <taxon>Pezizomycotina</taxon>
        <taxon>Eurotiomycetes</taxon>
        <taxon>Eurotiomycetidae</taxon>
        <taxon>Eurotiales</taxon>
        <taxon>Aspergillaceae</taxon>
        <taxon>Aspergillus</taxon>
        <taxon>Aspergillus subgen. Circumdati</taxon>
    </lineage>
</organism>
<accession>Q12120</accession>
<accession>A0A0F0HZ60</accession>
<protein>
    <recommendedName>
        <fullName evidence="9">Sterigmatocystin 8-O-methyltransferase</fullName>
        <ecNumber evidence="7">2.1.1.110</ecNumber>
    </recommendedName>
    <alternativeName>
        <fullName evidence="8">Aflatoxin biosynthesis protein P</fullName>
    </alternativeName>
</protein>
<name>AFLP_ASPPU</name>
<reference key="1">
    <citation type="journal article" date="1993" name="Appl. Environ. Microbiol.">
        <title>Cloning and characterization of a cDNA from Aspergillus parasiticus encoding an O-methyltransferase involved in aflatoxin biosynthesis.</title>
        <authorList>
            <person name="Yu J."/>
            <person name="Cary J.W."/>
            <person name="Bhatnager D."/>
            <person name="Cleveland T.E."/>
            <person name="Keller N.P."/>
            <person name="Chu F.S."/>
        </authorList>
    </citation>
    <scope>NUCLEOTIDE SEQUENCE [MRNA]</scope>
    <source>
        <strain>ATCC 56775 / NRRL 5862 / SRRC 143 / SU-1</strain>
    </source>
</reference>
<reference key="2">
    <citation type="submission" date="1993-11" db="EMBL/GenBank/DDBJ databases">
        <authorList>
            <person name="Yu J."/>
        </authorList>
    </citation>
    <scope>NUCLEOTIDE SEQUENCE [GENOMIC DNA]</scope>
    <source>
        <strain>70</strain>
    </source>
</reference>
<reference key="3">
    <citation type="journal article" date="1995" name="Gene">
        <title>Comparison of the omtA genes encoding O-methyltransferases involved in aflatoxin biosynthesis from Aspergillus parasiticus and A. flavus.</title>
        <authorList>
            <person name="Yu J."/>
            <person name="Chang P.-K."/>
            <person name="Payne G.A."/>
            <person name="Cary J.W."/>
            <person name="Bhatnagar D."/>
            <person name="Cleveland T.E."/>
        </authorList>
    </citation>
    <scope>NUCLEOTIDE SEQUENCE [GENOMIC DNA]</scope>
    <source>
        <strain>ATCC 56775 / NRRL 5862 / SRRC 143 / SU-1</strain>
    </source>
</reference>
<reference key="4">
    <citation type="journal article" date="2004" name="FEBS Lett.">
        <title>Completed sequence of aflatoxin pathway gene cluster in Aspergillus parasiticus.</title>
        <authorList>
            <person name="Yu J."/>
            <person name="Bhatnagar D."/>
            <person name="Cleveland T.E."/>
        </authorList>
    </citation>
    <scope>NUCLEOTIDE SEQUENCE [GENOMIC DNA]</scope>
    <source>
        <strain>ATCC 56775 / NRRL 5862 / SRRC 143 / SU-1</strain>
    </source>
</reference>
<reference key="5">
    <citation type="submission" date="2015-02" db="EMBL/GenBank/DDBJ databases">
        <title>Draft genome sequence of Aspergillus parasiticus SU-1.</title>
        <authorList>
            <person name="Yu J."/>
            <person name="Fedorova N."/>
            <person name="Yin Y."/>
            <person name="Losada L."/>
            <person name="Zafar N."/>
            <person name="Taujale R."/>
            <person name="Ehrlich K.C."/>
            <person name="Bhatnagar D."/>
            <person name="Cleveland T.E."/>
            <person name="Bennett J.W."/>
            <person name="Nierman W.C."/>
        </authorList>
    </citation>
    <scope>NUCLEOTIDE SEQUENCE [LARGE SCALE GENOMIC DNA]</scope>
    <source>
        <strain>ATCC 56775 / NRRL 5862 / SRRC 143 / SU-1</strain>
    </source>
</reference>
<reference key="6">
    <citation type="journal article" date="1993" name="Appl. Environ. Microbiol.">
        <title>Purification of a 40-kilodalton methyltransferase active in the aflatoxin biosynthetic pathway.</title>
        <authorList>
            <person name="Keller N.P."/>
            <person name="Dischinger H.C. Jr."/>
            <person name="Bhatnager D."/>
            <person name="Cleveland T.E."/>
            <person name="Ullah A.H.J."/>
        </authorList>
    </citation>
    <scope>PROTEIN SEQUENCE OF 42-63</scope>
    <scope>FUNCTION</scope>
    <scope>CATALYTIC ACTIVITY</scope>
    <scope>BIOPHYSICOCHEMICAL PROPERTIES</scope>
    <source>
        <strain>ATCC 56774 / SRRC 163 / avn-1</strain>
    </source>
</reference>
<reference key="7">
    <citation type="journal article" date="2004" name="Appl. Environ. Microbiol.">
        <title>Clustered pathway genes in aflatoxin biosynthesis.</title>
        <authorList>
            <person name="Yu J."/>
            <person name="Chang P.K."/>
            <person name="Ehrlich K.C."/>
            <person name="Cary J.W."/>
            <person name="Bhatnagar D."/>
            <person name="Cleveland T.E."/>
            <person name="Payne G.A."/>
            <person name="Linz J.E."/>
            <person name="Woloshuk C.P."/>
            <person name="Bennett J.W."/>
        </authorList>
    </citation>
    <scope>FUNCTION</scope>
    <scope>PATHWAY</scope>
    <scope>NOMENCLATURE</scope>
</reference>
<reference key="8">
    <citation type="journal article" date="2004" name="Arch. Microbiol.">
        <title>Subcellular localization of aflatoxin biosynthetic enzymes Nor-1, Ver-1, and OmtA in time-dependent fractionated colonies of Aspergillus parasiticus.</title>
        <authorList>
            <person name="Lee L.W."/>
            <person name="Chiou C.H."/>
            <person name="Klomparens K.L."/>
            <person name="Cary J.W."/>
            <person name="Linz J.E."/>
        </authorList>
    </citation>
    <scope>SUBCELLULAR LOCATION</scope>
</reference>
<reference key="9">
    <citation type="journal article" date="2012" name="Iran. J. Public Health">
        <title>Effect of curcumin on Aspergillus parasiticus growth and expression of major genes involved in the early and late stages of aflatoxin biosynthesis.</title>
        <authorList>
            <person name="Jahanshiri Z."/>
            <person name="Shams-Ghahfarokhi M."/>
            <person name="Allameh A."/>
            <person name="Razzaghi-Abyaneh M."/>
        </authorList>
    </citation>
    <scope>INDUCTION</scope>
</reference>
<reference key="10">
    <citation type="journal article" date="2013" name="Braz. J. Microbiol.">
        <title>The potential effects of Zataria multiflora Boiss essential oil on growth, aflatoxin production and transcription of aflatoxin biosynthesis pathway genes of toxigenic Aspergillus parasiticus.</title>
        <authorList>
            <person name="Yahyaraeyat R."/>
            <person name="Khosravi A.R."/>
            <person name="Shahbazzadeh D."/>
            <person name="Khalaj V."/>
        </authorList>
    </citation>
    <scope>INDUCTION</scope>
</reference>
<sequence length="418" mass="46397">MALPSKAALVGLANTLSEQVKRYLATAGETKSPEDHKLCIESERTPSSNEHAQAWEIVRTCDRIGSLVHGPVPWLLSNALSHLDSACLAAATHLNLQDIIVDGPSPTSLDTIVAATGVSEDLLRRILRGCAQRFIFEEVAPDQYAHTDASKMLRVTGIHALVGFSCDEVMRSGASFSDFLQQTKGKPPSWNVPSPFSLAFDPTKGLFDYYSTVDEVRGRRFDLGMGGTEATKPLVEEMFDFSSLPEGSTVVDVGGGRGHLSRRVSQKHPHLRFIVQDLPAVIHGVEDTDKVTMMEHDIRRPNPVRGADVYLLRSILHDYPDAACVEILSNIVTAMDPSKSRILLDEMIMPDLLAQDSQRFMNQIDMTVVLTLNGKERSTKEWNSLITTVDGRLETEKIWWRKGEEGSHWGVQQLRLRK</sequence>
<gene>
    <name evidence="8" type="primary">aflP</name>
    <name type="synonym">omt-1</name>
    <name type="synonym">omtA</name>
    <name type="ORF">P875_00052999-1</name>
</gene>
<keyword id="KW-0963">Cytoplasm</keyword>
<keyword id="KW-0903">Direct protein sequencing</keyword>
<keyword id="KW-0489">Methyltransferase</keyword>
<keyword id="KW-1185">Reference proteome</keyword>
<keyword id="KW-0949">S-adenosyl-L-methionine</keyword>
<keyword id="KW-0808">Transferase</keyword>
<keyword id="KW-0926">Vacuole</keyword>
<keyword id="KW-0865">Zymogen</keyword>
<comment type="function">
    <text evidence="7 11">Sterigmatocystin 8-O-methyltransferase; part of the gene cluster that mediates the biosynthesis of aflatoxins, a group of polyketide-derived furanocoumarins, and part of the most toxic and carcinogenic compounds among the known mycotoxins (PubMed:15006741, PubMed:8434913). The four major aflatoxins produced by A.parasiticus are aflatoxin B1 (AFB1), aflatoxin B2 (AFB2), aflatoxin G1 (AFG1) and aflatoxin G2 (AFG2) (PubMed:15006741). Within the aflatoxin pathway, the O-methyltransferase aflP uses both sterigmatocystin (ST) and dihydrosterigmatocystin (DHST) as substrates to yield O-methylsterigmatocystin (OMST) and dihydro-O-methylsterigmatocystin (DHOMST), respectively (PubMed:8434913). The biosynthesis of aflatoxins begins with the norsolorinic acid synthase aflC that combines a hexanoyl starter unit produced by the fatty acid synthase aflA/aflB and 7 malonyl-CoA extender units to synthesize the precursor NOR. The second step is the conversion of NOR to averantin and requires the norsolorinic acid ketoreductase aflD, which catalyzes the dehydration of norsolorinic acid to form (1'S)-averantin. The norsolorinic acid reductases aflE and aflF may also play a role in the conversion of NOR to AVN. The cytochrome P450 monooxygenase aflG then catalyzes the hydroxylation of AVN to 5'hydroxyaverantin (HAVN). The next step is performed by the 5'-hydroxyaverantin dehydrogenase aflH that transforms HAVN to 5'-oxoaverantin (OAVN) which is further converted to averufin (AVF) by aflK that plays a dual role in the pathway, as a 5'-oxoaverantin cyclase that mediates conversion of 5'-oxoaverantin, as well as a versicolorin B synthase in a later step in the pathway. The averufin oxidase aflI catalyzes the conversion of AVF to versiconal hemiacetal acetate (VHA). VHA is then the substrate for the versiconal hemiacetal acetate esterase aflJ to yield versiconal (VAL). Versicolorin B synthase aflK then converts VAL to versicolorin B (VERB) by closing the bisfuran ring of aflatoxin which is required for DNA-binding, thus giving to aflatoxin its activity as a mutagen. Then, the activity of the versicolorin B desaturase aflL leads to versicolorin A (VERA). A branch point starts from VERB since it can also be converted to dihydrodemethylsterigmatocystin (DMDHST), probably also by aflL, VERA being a precursor for aflatoxins B1 and G1, and DMDHST for aflatoxins B2 and G2. Next, the versicolorin reductase aflM and the cytochrome P450 monooxygenase aflN are involved in conversion of VERA to demethylsterigmatocystin (DMST). AflX and aflY seem also involved in this step, through probable aflX-mediated epoxide ring-opening step following versicolorin A oxidation and aflY-mediated Baeyer-Villiger oxidation required for the formation of the xanthone ring. The methyltransferase aflO then leads to the modification of DMST to sterigmatocystin (ST), and of DMDHST to dihydrosterigmatocystin (DHST). Both ST and DHST are then substrates of the O-methyltransferase aflP to yield O-methylsterigmatocystin (OMST) and dihydro-O-methylsterigmatocystin (DHOMST), respectively. Finally OMST is converted to aflatoxins B1 and G1, and DHOMST to aflatoxins B2 and G2, via the action of several enzymes including O-methylsterigmatocystin oxidoreductase aflQ, the cytochrome P450 monooxygenase aflU, but also the NADH-dependent flavin oxidoreductase nadA which is specifically required for the synthesis of AFG1 (PubMed:15006741).</text>
</comment>
<comment type="catalytic activity">
    <reaction evidence="7">
        <text>sterigmatocystin + S-adenosyl-L-methionine = 8-O-methylsterigmatocystin + S-adenosyl-L-homocysteine + H(+)</text>
        <dbReference type="Rhea" id="RHEA:15561"/>
        <dbReference type="ChEBI" id="CHEBI:15378"/>
        <dbReference type="ChEBI" id="CHEBI:18171"/>
        <dbReference type="ChEBI" id="CHEBI:18227"/>
        <dbReference type="ChEBI" id="CHEBI:57856"/>
        <dbReference type="ChEBI" id="CHEBI:59789"/>
        <dbReference type="EC" id="2.1.1.110"/>
    </reaction>
    <physiologicalReaction direction="left-to-right" evidence="7">
        <dbReference type="Rhea" id="RHEA:15562"/>
    </physiologicalReaction>
</comment>
<comment type="catalytic activity">
    <reaction evidence="7">
        <text>dihydrosterigmatocystin + S-adenosyl-L-methionine = 8-O-methyldihydrosterigmatocystin + S-adenosyl-L-homocysteine + H(+)</text>
        <dbReference type="Rhea" id="RHEA:35767"/>
        <dbReference type="ChEBI" id="CHEBI:15378"/>
        <dbReference type="ChEBI" id="CHEBI:57856"/>
        <dbReference type="ChEBI" id="CHEBI:59789"/>
        <dbReference type="ChEBI" id="CHEBI:72677"/>
        <dbReference type="ChEBI" id="CHEBI:72678"/>
        <dbReference type="EC" id="2.1.1.110"/>
    </reaction>
    <physiologicalReaction direction="left-to-right" evidence="7">
        <dbReference type="Rhea" id="RHEA:35768"/>
    </physiologicalReaction>
</comment>
<comment type="biophysicochemical properties">
    <kinetics>
        <KM evidence="7">2 uM for sterigmatocystin</KM>
        <KM evidence="7">9.6 uM for S-adenosyl-L-methionine</KM>
    </kinetics>
    <phDependence>
        <text evidence="7">Optimum pH is 7-9.4.</text>
    </phDependence>
    <temperatureDependence>
        <text evidence="7">Optimum temperature is 40-45 degrees Celsius.</text>
    </temperatureDependence>
</comment>
<comment type="pathway">
    <text evidence="11">Mycotoxin biosynthesis; aflatoxin biosynthesis.</text>
</comment>
<comment type="subcellular location">
    <subcellularLocation>
        <location evidence="4">Cytoplasm</location>
    </subcellularLocation>
    <subcellularLocation>
        <location evidence="4">Vacuole</location>
    </subcellularLocation>
</comment>
<comment type="induction">
    <text evidence="5 6">Zataria multiflora essential oil reduces gene expression (PubMed:24294264). Expression is repressed by curcumin (PubMed:23113196).</text>
</comment>
<comment type="similarity">
    <text evidence="3">Belongs to the class I-like SAM-binding methyltransferase superfamily. Cation-independent O-methyltransferase family. COMT subfamily.</text>
</comment>
<comment type="sequence caution" evidence="10">
    <conflict type="erroneous gene model prediction">
        <sequence resource="EMBL-CDS" id="KJK60770"/>
    </conflict>
    <text>The predicted gene P875_00052999 has been split into 2 genes: P875_00052999-1 (aflP) and P875_00052999-2 (aflO).</text>
</comment>
<proteinExistence type="evidence at protein level"/>
<feature type="propeptide" id="PRO_0000021898" evidence="7">
    <location>
        <begin position="1"/>
        <end position="41"/>
    </location>
</feature>
<feature type="chain" id="PRO_0000021899" description="Sterigmatocystin 8-O-methyltransferase">
    <location>
        <begin position="42"/>
        <end position="418"/>
    </location>
</feature>
<feature type="region of interest" description="Substrate binding" evidence="1">
    <location>
        <begin position="206"/>
        <end position="225"/>
    </location>
</feature>
<feature type="active site" description="Proton acceptor" evidence="3">
    <location>
        <position position="317"/>
    </location>
</feature>
<feature type="binding site" evidence="1">
    <location>
        <begin position="170"/>
        <end position="176"/>
    </location>
    <ligand>
        <name>substrate</name>
    </ligand>
</feature>
<feature type="binding site" evidence="2">
    <location>
        <begin position="254"/>
        <end position="255"/>
    </location>
    <ligand>
        <name>S-adenosyl-L-methionine</name>
        <dbReference type="ChEBI" id="CHEBI:59789"/>
    </ligand>
</feature>
<feature type="binding site" evidence="2">
    <location>
        <position position="277"/>
    </location>
    <ligand>
        <name>S-adenosyl-L-methionine</name>
        <dbReference type="ChEBI" id="CHEBI:59789"/>
    </ligand>
</feature>
<feature type="binding site" evidence="2">
    <location>
        <begin position="297"/>
        <end position="298"/>
    </location>
    <ligand>
        <name>S-adenosyl-L-methionine</name>
        <dbReference type="ChEBI" id="CHEBI:59789"/>
    </ligand>
</feature>
<feature type="binding site" evidence="2">
    <location>
        <position position="313"/>
    </location>
    <ligand>
        <name>S-adenosyl-L-methionine</name>
        <dbReference type="ChEBI" id="CHEBI:59789"/>
    </ligand>
</feature>
<feature type="sequence conflict" description="In Ref. 6; AA sequence." evidence="10" ref="6">
    <original>S</original>
    <variation>D</variation>
    <location>
        <position position="48"/>
    </location>
</feature>
<feature type="sequence conflict" description="In Ref. 6; AA sequence." evidence="10" ref="6">
    <original>C</original>
    <variation>Q</variation>
    <location>
        <position position="61"/>
    </location>
</feature>
<feature type="sequence conflict" description="In Ref. 6; AA sequence." evidence="10" ref="6">
    <original>R</original>
    <variation>P</variation>
    <location>
        <position position="63"/>
    </location>
</feature>